<protein>
    <recommendedName>
        <fullName evidence="1">Large ribosomal subunit protein uL22</fullName>
    </recommendedName>
    <alternativeName>
        <fullName evidence="2">50S ribosomal protein L22</fullName>
    </alternativeName>
</protein>
<name>RL22_BORBR</name>
<comment type="function">
    <text evidence="1">This protein binds specifically to 23S rRNA; its binding is stimulated by other ribosomal proteins, e.g. L4, L17, and L20. It is important during the early stages of 50S assembly. It makes multiple contacts with different domains of the 23S rRNA in the assembled 50S subunit and ribosome (By similarity).</text>
</comment>
<comment type="function">
    <text evidence="1">The globular domain of the protein is located near the polypeptide exit tunnel on the outside of the subunit, while an extended beta-hairpin is found that lines the wall of the exit tunnel in the center of the 70S ribosome.</text>
</comment>
<comment type="subunit">
    <text evidence="1">Part of the 50S ribosomal subunit.</text>
</comment>
<comment type="similarity">
    <text evidence="1">Belongs to the universal ribosomal protein uL22 family.</text>
</comment>
<dbReference type="EMBL" id="BX640437">
    <property type="protein sequence ID" value="CAE30536.1"/>
    <property type="molecule type" value="Genomic_DNA"/>
</dbReference>
<dbReference type="RefSeq" id="WP_010925688.1">
    <property type="nucleotide sequence ID" value="NC_002927.3"/>
</dbReference>
<dbReference type="SMR" id="Q7WRC0"/>
<dbReference type="GeneID" id="93206263"/>
<dbReference type="KEGG" id="bbr:BB0034"/>
<dbReference type="eggNOG" id="COG0091">
    <property type="taxonomic scope" value="Bacteria"/>
</dbReference>
<dbReference type="HOGENOM" id="CLU_083987_3_3_4"/>
<dbReference type="Proteomes" id="UP000001027">
    <property type="component" value="Chromosome"/>
</dbReference>
<dbReference type="GO" id="GO:0022625">
    <property type="term" value="C:cytosolic large ribosomal subunit"/>
    <property type="evidence" value="ECO:0007669"/>
    <property type="project" value="TreeGrafter"/>
</dbReference>
<dbReference type="GO" id="GO:0019843">
    <property type="term" value="F:rRNA binding"/>
    <property type="evidence" value="ECO:0007669"/>
    <property type="project" value="UniProtKB-UniRule"/>
</dbReference>
<dbReference type="GO" id="GO:0003735">
    <property type="term" value="F:structural constituent of ribosome"/>
    <property type="evidence" value="ECO:0007669"/>
    <property type="project" value="InterPro"/>
</dbReference>
<dbReference type="GO" id="GO:0006412">
    <property type="term" value="P:translation"/>
    <property type="evidence" value="ECO:0007669"/>
    <property type="project" value="UniProtKB-UniRule"/>
</dbReference>
<dbReference type="CDD" id="cd00336">
    <property type="entry name" value="Ribosomal_L22"/>
    <property type="match status" value="1"/>
</dbReference>
<dbReference type="FunFam" id="3.90.470.10:FF:000001">
    <property type="entry name" value="50S ribosomal protein L22"/>
    <property type="match status" value="1"/>
</dbReference>
<dbReference type="Gene3D" id="3.90.470.10">
    <property type="entry name" value="Ribosomal protein L22/L17"/>
    <property type="match status" value="1"/>
</dbReference>
<dbReference type="HAMAP" id="MF_01331_B">
    <property type="entry name" value="Ribosomal_uL22_B"/>
    <property type="match status" value="1"/>
</dbReference>
<dbReference type="InterPro" id="IPR001063">
    <property type="entry name" value="Ribosomal_uL22"/>
</dbReference>
<dbReference type="InterPro" id="IPR005727">
    <property type="entry name" value="Ribosomal_uL22_bac/chlpt-type"/>
</dbReference>
<dbReference type="InterPro" id="IPR047867">
    <property type="entry name" value="Ribosomal_uL22_bac/org-type"/>
</dbReference>
<dbReference type="InterPro" id="IPR018260">
    <property type="entry name" value="Ribosomal_uL22_CS"/>
</dbReference>
<dbReference type="InterPro" id="IPR036394">
    <property type="entry name" value="Ribosomal_uL22_sf"/>
</dbReference>
<dbReference type="NCBIfam" id="TIGR01044">
    <property type="entry name" value="rplV_bact"/>
    <property type="match status" value="1"/>
</dbReference>
<dbReference type="PANTHER" id="PTHR13501">
    <property type="entry name" value="CHLOROPLAST 50S RIBOSOMAL PROTEIN L22-RELATED"/>
    <property type="match status" value="1"/>
</dbReference>
<dbReference type="PANTHER" id="PTHR13501:SF8">
    <property type="entry name" value="LARGE RIBOSOMAL SUBUNIT PROTEIN UL22M"/>
    <property type="match status" value="1"/>
</dbReference>
<dbReference type="Pfam" id="PF00237">
    <property type="entry name" value="Ribosomal_L22"/>
    <property type="match status" value="1"/>
</dbReference>
<dbReference type="SUPFAM" id="SSF54843">
    <property type="entry name" value="Ribosomal protein L22"/>
    <property type="match status" value="1"/>
</dbReference>
<dbReference type="PROSITE" id="PS00464">
    <property type="entry name" value="RIBOSOMAL_L22"/>
    <property type="match status" value="1"/>
</dbReference>
<organism>
    <name type="scientific">Bordetella bronchiseptica (strain ATCC BAA-588 / NCTC 13252 / RB50)</name>
    <name type="common">Alcaligenes bronchisepticus</name>
    <dbReference type="NCBI Taxonomy" id="257310"/>
    <lineage>
        <taxon>Bacteria</taxon>
        <taxon>Pseudomonadati</taxon>
        <taxon>Pseudomonadota</taxon>
        <taxon>Betaproteobacteria</taxon>
        <taxon>Burkholderiales</taxon>
        <taxon>Alcaligenaceae</taxon>
        <taxon>Bordetella</taxon>
    </lineage>
</organism>
<evidence type="ECO:0000255" key="1">
    <source>
        <dbReference type="HAMAP-Rule" id="MF_01331"/>
    </source>
</evidence>
<evidence type="ECO:0000305" key="2"/>
<reference key="1">
    <citation type="journal article" date="2003" name="Nat. Genet.">
        <title>Comparative analysis of the genome sequences of Bordetella pertussis, Bordetella parapertussis and Bordetella bronchiseptica.</title>
        <authorList>
            <person name="Parkhill J."/>
            <person name="Sebaihia M."/>
            <person name="Preston A."/>
            <person name="Murphy L.D."/>
            <person name="Thomson N.R."/>
            <person name="Harris D.E."/>
            <person name="Holden M.T.G."/>
            <person name="Churcher C.M."/>
            <person name="Bentley S.D."/>
            <person name="Mungall K.L."/>
            <person name="Cerdeno-Tarraga A.-M."/>
            <person name="Temple L."/>
            <person name="James K.D."/>
            <person name="Harris B."/>
            <person name="Quail M.A."/>
            <person name="Achtman M."/>
            <person name="Atkin R."/>
            <person name="Baker S."/>
            <person name="Basham D."/>
            <person name="Bason N."/>
            <person name="Cherevach I."/>
            <person name="Chillingworth T."/>
            <person name="Collins M."/>
            <person name="Cronin A."/>
            <person name="Davis P."/>
            <person name="Doggett J."/>
            <person name="Feltwell T."/>
            <person name="Goble A."/>
            <person name="Hamlin N."/>
            <person name="Hauser H."/>
            <person name="Holroyd S."/>
            <person name="Jagels K."/>
            <person name="Leather S."/>
            <person name="Moule S."/>
            <person name="Norberczak H."/>
            <person name="O'Neil S."/>
            <person name="Ormond D."/>
            <person name="Price C."/>
            <person name="Rabbinowitsch E."/>
            <person name="Rutter S."/>
            <person name="Sanders M."/>
            <person name="Saunders D."/>
            <person name="Seeger K."/>
            <person name="Sharp S."/>
            <person name="Simmonds M."/>
            <person name="Skelton J."/>
            <person name="Squares R."/>
            <person name="Squares S."/>
            <person name="Stevens K."/>
            <person name="Unwin L."/>
            <person name="Whitehead S."/>
            <person name="Barrell B.G."/>
            <person name="Maskell D.J."/>
        </authorList>
    </citation>
    <scope>NUCLEOTIDE SEQUENCE [LARGE SCALE GENOMIC DNA]</scope>
    <source>
        <strain>ATCC BAA-588 / NCTC 13252 / RB50</strain>
    </source>
</reference>
<proteinExistence type="inferred from homology"/>
<keyword id="KW-0687">Ribonucleoprotein</keyword>
<keyword id="KW-0689">Ribosomal protein</keyword>
<keyword id="KW-0694">RNA-binding</keyword>
<keyword id="KW-0699">rRNA-binding</keyword>
<accession>Q7WRC0</accession>
<feature type="chain" id="PRO_0000125123" description="Large ribosomal subunit protein uL22">
    <location>
        <begin position="1"/>
        <end position="109"/>
    </location>
</feature>
<sequence length="109" mass="11782">METTAIIRGVHISAQKTRLVADLIRGKSVAQALNILTFSPKKAAVILKKAVESAIANAEHNDGADIDELKVTTIFVDKAQSMKRFSARAKGRGNRIEKQTCHITVKVGA</sequence>
<gene>
    <name evidence="1" type="primary">rplV</name>
    <name type="ordered locus">BB0034</name>
</gene>